<protein>
    <recommendedName>
        <fullName evidence="1">tRNA modification GTPase MnmE</fullName>
        <ecNumber evidence="1">3.6.-.-</ecNumber>
    </recommendedName>
</protein>
<reference key="1">
    <citation type="journal article" date="2005" name="Science">
        <title>Life at depth: Photobacterium profundum genome sequence and expression analysis.</title>
        <authorList>
            <person name="Vezzi A."/>
            <person name="Campanaro S."/>
            <person name="D'Angelo M."/>
            <person name="Simonato F."/>
            <person name="Vitulo N."/>
            <person name="Lauro F.M."/>
            <person name="Cestaro A."/>
            <person name="Malacrida G."/>
            <person name="Simionati B."/>
            <person name="Cannata N."/>
            <person name="Romualdi C."/>
            <person name="Bartlett D.H."/>
            <person name="Valle G."/>
        </authorList>
    </citation>
    <scope>NUCLEOTIDE SEQUENCE [LARGE SCALE GENOMIC DNA]</scope>
    <source>
        <strain>ATCC BAA-1253 / SS9</strain>
    </source>
</reference>
<proteinExistence type="inferred from homology"/>
<gene>
    <name evidence="1" type="primary">mnmE</name>
    <name evidence="1" type="synonym">trmE</name>
    <name type="ordered locus">PBPRA0002</name>
</gene>
<comment type="function">
    <text evidence="1">Exhibits a very high intrinsic GTPase hydrolysis rate. Involved in the addition of a carboxymethylaminomethyl (cmnm) group at the wobble position (U34) of certain tRNAs, forming tRNA-cmnm(5)s(2)U34.</text>
</comment>
<comment type="cofactor">
    <cofactor evidence="1">
        <name>K(+)</name>
        <dbReference type="ChEBI" id="CHEBI:29103"/>
    </cofactor>
    <text evidence="1">Binds 1 potassium ion per subunit.</text>
</comment>
<comment type="subunit">
    <text evidence="1">Homodimer. Heterotetramer of two MnmE and two MnmG subunits.</text>
</comment>
<comment type="subcellular location">
    <subcellularLocation>
        <location evidence="1">Cytoplasm</location>
    </subcellularLocation>
</comment>
<comment type="similarity">
    <text evidence="1">Belongs to the TRAFAC class TrmE-Era-EngA-EngB-Septin-like GTPase superfamily. TrmE GTPase family.</text>
</comment>
<dbReference type="EC" id="3.6.-.-" evidence="1"/>
<dbReference type="EMBL" id="CR378663">
    <property type="protein sequence ID" value="CAG18457.1"/>
    <property type="molecule type" value="Genomic_DNA"/>
</dbReference>
<dbReference type="RefSeq" id="WP_011216838.1">
    <property type="nucleotide sequence ID" value="NC_006370.1"/>
</dbReference>
<dbReference type="SMR" id="Q6LW56"/>
<dbReference type="STRING" id="298386.PBPRA0002"/>
<dbReference type="KEGG" id="ppr:PBPRA0002"/>
<dbReference type="eggNOG" id="COG0486">
    <property type="taxonomic scope" value="Bacteria"/>
</dbReference>
<dbReference type="HOGENOM" id="CLU_019624_4_1_6"/>
<dbReference type="Proteomes" id="UP000000593">
    <property type="component" value="Chromosome 1"/>
</dbReference>
<dbReference type="GO" id="GO:0005829">
    <property type="term" value="C:cytosol"/>
    <property type="evidence" value="ECO:0007669"/>
    <property type="project" value="TreeGrafter"/>
</dbReference>
<dbReference type="GO" id="GO:0005525">
    <property type="term" value="F:GTP binding"/>
    <property type="evidence" value="ECO:0007669"/>
    <property type="project" value="UniProtKB-UniRule"/>
</dbReference>
<dbReference type="GO" id="GO:0003924">
    <property type="term" value="F:GTPase activity"/>
    <property type="evidence" value="ECO:0007669"/>
    <property type="project" value="UniProtKB-UniRule"/>
</dbReference>
<dbReference type="GO" id="GO:0046872">
    <property type="term" value="F:metal ion binding"/>
    <property type="evidence" value="ECO:0007669"/>
    <property type="project" value="UniProtKB-KW"/>
</dbReference>
<dbReference type="GO" id="GO:0030488">
    <property type="term" value="P:tRNA methylation"/>
    <property type="evidence" value="ECO:0007669"/>
    <property type="project" value="TreeGrafter"/>
</dbReference>
<dbReference type="GO" id="GO:0002098">
    <property type="term" value="P:tRNA wobble uridine modification"/>
    <property type="evidence" value="ECO:0007669"/>
    <property type="project" value="TreeGrafter"/>
</dbReference>
<dbReference type="CDD" id="cd04164">
    <property type="entry name" value="trmE"/>
    <property type="match status" value="1"/>
</dbReference>
<dbReference type="CDD" id="cd14858">
    <property type="entry name" value="TrmE_N"/>
    <property type="match status" value="1"/>
</dbReference>
<dbReference type="FunFam" id="3.30.1360.120:FF:000001">
    <property type="entry name" value="tRNA modification GTPase MnmE"/>
    <property type="match status" value="1"/>
</dbReference>
<dbReference type="FunFam" id="3.40.50.300:FF:000249">
    <property type="entry name" value="tRNA modification GTPase MnmE"/>
    <property type="match status" value="1"/>
</dbReference>
<dbReference type="Gene3D" id="3.40.50.300">
    <property type="entry name" value="P-loop containing nucleotide triphosphate hydrolases"/>
    <property type="match status" value="1"/>
</dbReference>
<dbReference type="Gene3D" id="3.30.1360.120">
    <property type="entry name" value="Probable tRNA modification gtpase trme, domain 1"/>
    <property type="match status" value="1"/>
</dbReference>
<dbReference type="Gene3D" id="1.20.120.430">
    <property type="entry name" value="tRNA modification GTPase MnmE domain 2"/>
    <property type="match status" value="1"/>
</dbReference>
<dbReference type="HAMAP" id="MF_00379">
    <property type="entry name" value="GTPase_MnmE"/>
    <property type="match status" value="1"/>
</dbReference>
<dbReference type="InterPro" id="IPR031168">
    <property type="entry name" value="G_TrmE"/>
</dbReference>
<dbReference type="InterPro" id="IPR006073">
    <property type="entry name" value="GTP-bd"/>
</dbReference>
<dbReference type="InterPro" id="IPR018948">
    <property type="entry name" value="GTP-bd_TrmE_N"/>
</dbReference>
<dbReference type="InterPro" id="IPR004520">
    <property type="entry name" value="GTPase_MnmE"/>
</dbReference>
<dbReference type="InterPro" id="IPR027368">
    <property type="entry name" value="MnmE_dom2"/>
</dbReference>
<dbReference type="InterPro" id="IPR025867">
    <property type="entry name" value="MnmE_helical"/>
</dbReference>
<dbReference type="InterPro" id="IPR027417">
    <property type="entry name" value="P-loop_NTPase"/>
</dbReference>
<dbReference type="InterPro" id="IPR005225">
    <property type="entry name" value="Small_GTP-bd"/>
</dbReference>
<dbReference type="InterPro" id="IPR027266">
    <property type="entry name" value="TrmE/GcvT_dom1"/>
</dbReference>
<dbReference type="NCBIfam" id="TIGR00450">
    <property type="entry name" value="mnmE_trmE_thdF"/>
    <property type="match status" value="1"/>
</dbReference>
<dbReference type="NCBIfam" id="NF003661">
    <property type="entry name" value="PRK05291.1-3"/>
    <property type="match status" value="1"/>
</dbReference>
<dbReference type="NCBIfam" id="TIGR00231">
    <property type="entry name" value="small_GTP"/>
    <property type="match status" value="1"/>
</dbReference>
<dbReference type="PANTHER" id="PTHR42714">
    <property type="entry name" value="TRNA MODIFICATION GTPASE GTPBP3"/>
    <property type="match status" value="1"/>
</dbReference>
<dbReference type="PANTHER" id="PTHR42714:SF2">
    <property type="entry name" value="TRNA MODIFICATION GTPASE GTPBP3, MITOCHONDRIAL"/>
    <property type="match status" value="1"/>
</dbReference>
<dbReference type="Pfam" id="PF01926">
    <property type="entry name" value="MMR_HSR1"/>
    <property type="match status" value="1"/>
</dbReference>
<dbReference type="Pfam" id="PF12631">
    <property type="entry name" value="MnmE_helical"/>
    <property type="match status" value="1"/>
</dbReference>
<dbReference type="Pfam" id="PF10396">
    <property type="entry name" value="TrmE_N"/>
    <property type="match status" value="1"/>
</dbReference>
<dbReference type="PRINTS" id="PR00326">
    <property type="entry name" value="GTP1OBG"/>
</dbReference>
<dbReference type="SUPFAM" id="SSF52540">
    <property type="entry name" value="P-loop containing nucleoside triphosphate hydrolases"/>
    <property type="match status" value="1"/>
</dbReference>
<dbReference type="SUPFAM" id="SSF116878">
    <property type="entry name" value="TrmE connector domain"/>
    <property type="match status" value="1"/>
</dbReference>
<dbReference type="PROSITE" id="PS51709">
    <property type="entry name" value="G_TRME"/>
    <property type="match status" value="1"/>
</dbReference>
<accession>Q6LW56</accession>
<name>MNME_PHOPR</name>
<evidence type="ECO:0000255" key="1">
    <source>
        <dbReference type="HAMAP-Rule" id="MF_00379"/>
    </source>
</evidence>
<feature type="chain" id="PRO_1000048844" description="tRNA modification GTPase MnmE">
    <location>
        <begin position="1"/>
        <end position="455"/>
    </location>
</feature>
<feature type="domain" description="TrmE-type G">
    <location>
        <begin position="217"/>
        <end position="378"/>
    </location>
</feature>
<feature type="binding site" evidence="1">
    <location>
        <position position="24"/>
    </location>
    <ligand>
        <name>(6S)-5-formyl-5,6,7,8-tetrahydrofolate</name>
        <dbReference type="ChEBI" id="CHEBI:57457"/>
    </ligand>
</feature>
<feature type="binding site" evidence="1">
    <location>
        <position position="81"/>
    </location>
    <ligand>
        <name>(6S)-5-formyl-5,6,7,8-tetrahydrofolate</name>
        <dbReference type="ChEBI" id="CHEBI:57457"/>
    </ligand>
</feature>
<feature type="binding site" evidence="1">
    <location>
        <position position="121"/>
    </location>
    <ligand>
        <name>(6S)-5-formyl-5,6,7,8-tetrahydrofolate</name>
        <dbReference type="ChEBI" id="CHEBI:57457"/>
    </ligand>
</feature>
<feature type="binding site" evidence="1">
    <location>
        <begin position="227"/>
        <end position="232"/>
    </location>
    <ligand>
        <name>GTP</name>
        <dbReference type="ChEBI" id="CHEBI:37565"/>
    </ligand>
</feature>
<feature type="binding site" evidence="1">
    <location>
        <position position="227"/>
    </location>
    <ligand>
        <name>K(+)</name>
        <dbReference type="ChEBI" id="CHEBI:29103"/>
    </ligand>
</feature>
<feature type="binding site" evidence="1">
    <location>
        <position position="231"/>
    </location>
    <ligand>
        <name>Mg(2+)</name>
        <dbReference type="ChEBI" id="CHEBI:18420"/>
    </ligand>
</feature>
<feature type="binding site" evidence="1">
    <location>
        <begin position="246"/>
        <end position="252"/>
    </location>
    <ligand>
        <name>GTP</name>
        <dbReference type="ChEBI" id="CHEBI:37565"/>
    </ligand>
</feature>
<feature type="binding site" evidence="1">
    <location>
        <position position="246"/>
    </location>
    <ligand>
        <name>K(+)</name>
        <dbReference type="ChEBI" id="CHEBI:29103"/>
    </ligand>
</feature>
<feature type="binding site" evidence="1">
    <location>
        <position position="248"/>
    </location>
    <ligand>
        <name>K(+)</name>
        <dbReference type="ChEBI" id="CHEBI:29103"/>
    </ligand>
</feature>
<feature type="binding site" evidence="1">
    <location>
        <position position="251"/>
    </location>
    <ligand>
        <name>K(+)</name>
        <dbReference type="ChEBI" id="CHEBI:29103"/>
    </ligand>
</feature>
<feature type="binding site" evidence="1">
    <location>
        <position position="252"/>
    </location>
    <ligand>
        <name>Mg(2+)</name>
        <dbReference type="ChEBI" id="CHEBI:18420"/>
    </ligand>
</feature>
<feature type="binding site" evidence="1">
    <location>
        <begin position="271"/>
        <end position="274"/>
    </location>
    <ligand>
        <name>GTP</name>
        <dbReference type="ChEBI" id="CHEBI:37565"/>
    </ligand>
</feature>
<feature type="binding site" evidence="1">
    <location>
        <begin position="359"/>
        <end position="361"/>
    </location>
    <ligand>
        <name>GTP</name>
        <dbReference type="ChEBI" id="CHEBI:37565"/>
    </ligand>
</feature>
<feature type="binding site" evidence="1">
    <location>
        <position position="455"/>
    </location>
    <ligand>
        <name>(6S)-5-formyl-5,6,7,8-tetrahydrofolate</name>
        <dbReference type="ChEBI" id="CHEBI:57457"/>
    </ligand>
</feature>
<sequence>MNEYTDTIVAQATPPGRGGVGIIRVSGPKAKEVALAVAGRELKTRYAEYLPFKNEDGSALDQGIALFFKGPNSFTGEDVLELQGHGGPVLMDMMIRRILKLEGIRPARPGEFSERAFMNDKLDLAQAEAIADLIDASSEEAAKSAFRSLQGAFSTKVNELVEAVIHLRIYVEAAIDFPEEEIDFLSDGKVSNDLHGIIDNLEAVRREANQGSIIREGMKVVIAGRPNAGKSSLLNALSGKDSAIVTDIAGTTRDVLREHIHIDGMPLHIIDTAGLREASNEVERIGIERAWEEIQQADRVLFMVDGTTTNDTDPKDIWPDFIERLPESMGLTVIRNKVELTGEAAGICHVNNPPLIRLSARTGEGIDSLREHLKDCMGFSGTTEGGFMARRRHLEALEQAAQHLEIGKEQLEGFMAGEILAEELRLAQQHLSEITGEFTSDDLLGRIFTSFCIGK</sequence>
<organism>
    <name type="scientific">Photobacterium profundum (strain SS9)</name>
    <dbReference type="NCBI Taxonomy" id="298386"/>
    <lineage>
        <taxon>Bacteria</taxon>
        <taxon>Pseudomonadati</taxon>
        <taxon>Pseudomonadota</taxon>
        <taxon>Gammaproteobacteria</taxon>
        <taxon>Vibrionales</taxon>
        <taxon>Vibrionaceae</taxon>
        <taxon>Photobacterium</taxon>
    </lineage>
</organism>
<keyword id="KW-0963">Cytoplasm</keyword>
<keyword id="KW-0342">GTP-binding</keyword>
<keyword id="KW-0378">Hydrolase</keyword>
<keyword id="KW-0460">Magnesium</keyword>
<keyword id="KW-0479">Metal-binding</keyword>
<keyword id="KW-0547">Nucleotide-binding</keyword>
<keyword id="KW-0630">Potassium</keyword>
<keyword id="KW-1185">Reference proteome</keyword>
<keyword id="KW-0819">tRNA processing</keyword>